<evidence type="ECO:0000250" key="1">
    <source>
        <dbReference type="UniProtKB" id="Q5VVX9"/>
    </source>
</evidence>
<evidence type="ECO:0000255" key="2">
    <source>
        <dbReference type="PROSITE-ProRule" id="PRU00388"/>
    </source>
</evidence>
<evidence type="ECO:0000255" key="3">
    <source>
        <dbReference type="PROSITE-ProRule" id="PRU10133"/>
    </source>
</evidence>
<evidence type="ECO:0000256" key="4">
    <source>
        <dbReference type="SAM" id="MobiDB-lite"/>
    </source>
</evidence>
<evidence type="ECO:0000269" key="5">
    <source>
    </source>
</evidence>
<reference key="1">
    <citation type="submission" date="1997-12" db="EMBL/GenBank/DDBJ databases">
        <title>Molecular cloning and characterisation of CaRAD6 gene from Candida albicans.</title>
        <authorList>
            <person name="Leng P."/>
            <person name="Brown A.J.P."/>
        </authorList>
    </citation>
    <scope>NUCLEOTIDE SEQUENCE [MRNA]</scope>
    <source>
        <strain>3153A</strain>
    </source>
</reference>
<reference key="2">
    <citation type="journal article" date="2000" name="Mol. Microbiol.">
        <title>Rad6p represses yeast-hypha morphogenesis in the human fungal pathogen Candida albicans.</title>
        <authorList>
            <person name="Leng P."/>
            <person name="Sudbery P.E."/>
            <person name="Brown A.J.P."/>
        </authorList>
    </citation>
    <scope>NUCLEOTIDE SEQUENCE [GENOMIC DNA]</scope>
    <scope>FUNCTION</scope>
    <scope>INDUCTION</scope>
    <source>
        <strain>3153A</strain>
    </source>
</reference>
<reference key="3">
    <citation type="journal article" date="2004" name="Proc. Natl. Acad. Sci. U.S.A.">
        <title>The diploid genome sequence of Candida albicans.</title>
        <authorList>
            <person name="Jones T."/>
            <person name="Federspiel N.A."/>
            <person name="Chibana H."/>
            <person name="Dungan J."/>
            <person name="Kalman S."/>
            <person name="Magee B.B."/>
            <person name="Newport G."/>
            <person name="Thorstenson Y.R."/>
            <person name="Agabian N."/>
            <person name="Magee P.T."/>
            <person name="Davis R.W."/>
            <person name="Scherer S."/>
        </authorList>
    </citation>
    <scope>NUCLEOTIDE SEQUENCE [LARGE SCALE GENOMIC DNA]</scope>
    <source>
        <strain>SC5314 / ATCC MYA-2876</strain>
    </source>
</reference>
<reference key="4">
    <citation type="journal article" date="2007" name="Genome Biol.">
        <title>Assembly of the Candida albicans genome into sixteen supercontigs aligned on the eight chromosomes.</title>
        <authorList>
            <person name="van het Hoog M."/>
            <person name="Rast T.J."/>
            <person name="Martchenko M."/>
            <person name="Grindle S."/>
            <person name="Dignard D."/>
            <person name="Hogues H."/>
            <person name="Cuomo C."/>
            <person name="Berriman M."/>
            <person name="Scherer S."/>
            <person name="Magee B.B."/>
            <person name="Whiteway M."/>
            <person name="Chibana H."/>
            <person name="Nantel A."/>
            <person name="Magee P.T."/>
        </authorList>
    </citation>
    <scope>GENOME REANNOTATION</scope>
    <source>
        <strain>SC5314 / ATCC MYA-2876</strain>
    </source>
</reference>
<reference key="5">
    <citation type="journal article" date="2013" name="Genome Biol.">
        <title>Assembly of a phased diploid Candida albicans genome facilitates allele-specific measurements and provides a simple model for repeat and indel structure.</title>
        <authorList>
            <person name="Muzzey D."/>
            <person name="Schwartz K."/>
            <person name="Weissman J.S."/>
            <person name="Sherlock G."/>
        </authorList>
    </citation>
    <scope>NUCLEOTIDE SEQUENCE [LARGE SCALE GENOMIC DNA]</scope>
    <scope>GENOME REANNOTATION</scope>
    <source>
        <strain>SC5314 / ATCC MYA-2876</strain>
    </source>
</reference>
<accession>O74201</accession>
<accession>A0A1D8PRG3</accession>
<accession>Q5A0A0</accession>
<organism>
    <name type="scientific">Candida albicans (strain SC5314 / ATCC MYA-2876)</name>
    <name type="common">Yeast</name>
    <dbReference type="NCBI Taxonomy" id="237561"/>
    <lineage>
        <taxon>Eukaryota</taxon>
        <taxon>Fungi</taxon>
        <taxon>Dikarya</taxon>
        <taxon>Ascomycota</taxon>
        <taxon>Saccharomycotina</taxon>
        <taxon>Pichiomycetes</taxon>
        <taxon>Debaryomycetaceae</taxon>
        <taxon>Candida/Lodderomyces clade</taxon>
        <taxon>Candida</taxon>
    </lineage>
</organism>
<feature type="chain" id="PRO_0000082528" description="Ubiquitin-conjugating enzyme E2 2">
    <location>
        <begin position="1"/>
        <end position="179"/>
    </location>
</feature>
<feature type="domain" description="UBC core" evidence="2">
    <location>
        <begin position="4"/>
        <end position="150"/>
    </location>
</feature>
<feature type="region of interest" description="Disordered" evidence="4">
    <location>
        <begin position="1"/>
        <end position="28"/>
    </location>
</feature>
<feature type="region of interest" description="Disordered" evidence="4">
    <location>
        <begin position="145"/>
        <end position="179"/>
    </location>
</feature>
<feature type="region of interest" description="Acidic tail">
    <location>
        <begin position="151"/>
        <end position="179"/>
    </location>
</feature>
<feature type="compositionally biased region" description="Acidic residues" evidence="4">
    <location>
        <begin position="149"/>
        <end position="179"/>
    </location>
</feature>
<feature type="active site" description="Glycyl thioester intermediate" evidence="2 3">
    <location>
        <position position="88"/>
    </location>
</feature>
<proteinExistence type="evidence at transcript level"/>
<gene>
    <name type="primary">UBC2</name>
    <name type="synonym">RAD6</name>
    <name type="ordered locus">CAALFM_C703870WA</name>
    <name type="ORF">CaO19.7195</name>
</gene>
<comment type="function">
    <text evidence="2 5">Catalyzes the covalent attachment of ubiquitin to other proteins. Plays a role in transcription regulation by catalyzing the monoubiquitination of histone H2B to form H2BK123ub1. H2BK123ub1 gives a specific tag for epigenetic transcriptional activation and is also a prerequisite for H3K4me and H3K79me formation. Also involved in postreplication repair of UV-damaged DNA, in N-end rule-dependent protein degradation and in sporulation.</text>
</comment>
<comment type="catalytic activity">
    <reaction evidence="2 3">
        <text>S-ubiquitinyl-[E1 ubiquitin-activating enzyme]-L-cysteine + [E2 ubiquitin-conjugating enzyme]-L-cysteine = [E1 ubiquitin-activating enzyme]-L-cysteine + S-ubiquitinyl-[E2 ubiquitin-conjugating enzyme]-L-cysteine.</text>
        <dbReference type="EC" id="2.3.2.23"/>
    </reaction>
</comment>
<comment type="pathway">
    <text evidence="2">Protein modification; protein ubiquitination.</text>
</comment>
<comment type="subcellular location">
    <subcellularLocation>
        <location evidence="1">Cytoplasm</location>
    </subcellularLocation>
    <subcellularLocation>
        <location evidence="1">Nucleus</location>
    </subcellularLocation>
</comment>
<comment type="induction">
    <text evidence="5">Up-regulated by UV radiation, heat shock, osmotic stress and nitrogen starvation.</text>
</comment>
<comment type="similarity">
    <text evidence="2">Belongs to the ubiquitin-conjugating enzyme family.</text>
</comment>
<keyword id="KW-0067">ATP-binding</keyword>
<keyword id="KW-0156">Chromatin regulator</keyword>
<keyword id="KW-0963">Cytoplasm</keyword>
<keyword id="KW-0227">DNA damage</keyword>
<keyword id="KW-0234">DNA repair</keyword>
<keyword id="KW-0547">Nucleotide-binding</keyword>
<keyword id="KW-0539">Nucleus</keyword>
<keyword id="KW-1185">Reference proteome</keyword>
<keyword id="KW-0749">Sporulation</keyword>
<keyword id="KW-0804">Transcription</keyword>
<keyword id="KW-0805">Transcription regulation</keyword>
<keyword id="KW-0808">Transferase</keyword>
<keyword id="KW-0833">Ubl conjugation pathway</keyword>
<name>UBC2_CANAL</name>
<dbReference type="EC" id="2.3.2.23"/>
<dbReference type="EMBL" id="AF036707">
    <property type="protein sequence ID" value="AAC24765.1"/>
    <property type="molecule type" value="mRNA"/>
</dbReference>
<dbReference type="EMBL" id="AF118145">
    <property type="protein sequence ID" value="AAD45241.1"/>
    <property type="molecule type" value="Genomic_DNA"/>
</dbReference>
<dbReference type="EMBL" id="CP017629">
    <property type="protein sequence ID" value="AOW30727.1"/>
    <property type="molecule type" value="Genomic_DNA"/>
</dbReference>
<dbReference type="RefSeq" id="XP_019331041.1">
    <property type="nucleotide sequence ID" value="XM_019475496.1"/>
</dbReference>
<dbReference type="SMR" id="O74201"/>
<dbReference type="FunCoup" id="O74201">
    <property type="interactions" value="838"/>
</dbReference>
<dbReference type="STRING" id="237561.O74201"/>
<dbReference type="EnsemblFungi" id="C7_03870W_A-T">
    <property type="protein sequence ID" value="C7_03870W_A-T-p1"/>
    <property type="gene ID" value="C7_03870W_A"/>
</dbReference>
<dbReference type="GeneID" id="3643143"/>
<dbReference type="KEGG" id="cal:CAALFM_C703870WA"/>
<dbReference type="CGD" id="CAL0000194082">
    <property type="gene designation" value="RAD6"/>
</dbReference>
<dbReference type="VEuPathDB" id="FungiDB:C7_03870W_A"/>
<dbReference type="eggNOG" id="KOG0419">
    <property type="taxonomic scope" value="Eukaryota"/>
</dbReference>
<dbReference type="HOGENOM" id="CLU_030988_10_3_1"/>
<dbReference type="InParanoid" id="O74201"/>
<dbReference type="OMA" id="DHKSQYI"/>
<dbReference type="OrthoDB" id="9984419at2759"/>
<dbReference type="UniPathway" id="UPA00143"/>
<dbReference type="Proteomes" id="UP000000559">
    <property type="component" value="Chromosome 7"/>
</dbReference>
<dbReference type="GO" id="GO:0000781">
    <property type="term" value="C:chromosome, telomeric region"/>
    <property type="evidence" value="ECO:0007669"/>
    <property type="project" value="GOC"/>
</dbReference>
<dbReference type="GO" id="GO:0005737">
    <property type="term" value="C:cytoplasm"/>
    <property type="evidence" value="ECO:0007669"/>
    <property type="project" value="UniProtKB-SubCell"/>
</dbReference>
<dbReference type="GO" id="GO:0062040">
    <property type="term" value="C:fungal biofilm matrix"/>
    <property type="evidence" value="ECO:0000314"/>
    <property type="project" value="CGD"/>
</dbReference>
<dbReference type="GO" id="GO:0033503">
    <property type="term" value="C:HULC complex"/>
    <property type="evidence" value="ECO:0000318"/>
    <property type="project" value="GO_Central"/>
</dbReference>
<dbReference type="GO" id="GO:1990304">
    <property type="term" value="C:MUB1-RAD6-UBR2 ubiquitin ligase complex"/>
    <property type="evidence" value="ECO:0007669"/>
    <property type="project" value="EnsemblFungi"/>
</dbReference>
<dbReference type="GO" id="GO:0005634">
    <property type="term" value="C:nucleus"/>
    <property type="evidence" value="ECO:0007669"/>
    <property type="project" value="UniProtKB-SubCell"/>
</dbReference>
<dbReference type="GO" id="GO:0097505">
    <property type="term" value="C:Rad6-Rad18 complex"/>
    <property type="evidence" value="ECO:0007669"/>
    <property type="project" value="EnsemblFungi"/>
</dbReference>
<dbReference type="GO" id="GO:1990305">
    <property type="term" value="C:RAD6-UBR2 ubiquitin ligase complex"/>
    <property type="evidence" value="ECO:0007669"/>
    <property type="project" value="EnsemblFungi"/>
</dbReference>
<dbReference type="GO" id="GO:1990303">
    <property type="term" value="C:UBR1-RAD6 ubiquitin ligase complex"/>
    <property type="evidence" value="ECO:0007669"/>
    <property type="project" value="EnsemblFungi"/>
</dbReference>
<dbReference type="GO" id="GO:0005524">
    <property type="term" value="F:ATP binding"/>
    <property type="evidence" value="ECO:0007669"/>
    <property type="project" value="UniProtKB-KW"/>
</dbReference>
<dbReference type="GO" id="GO:0070628">
    <property type="term" value="F:proteasome binding"/>
    <property type="evidence" value="ECO:0007669"/>
    <property type="project" value="EnsemblFungi"/>
</dbReference>
<dbReference type="GO" id="GO:0003697">
    <property type="term" value="F:single-stranded DNA binding"/>
    <property type="evidence" value="ECO:0007669"/>
    <property type="project" value="EnsemblFungi"/>
</dbReference>
<dbReference type="GO" id="GO:0017116">
    <property type="term" value="F:single-stranded DNA helicase activity"/>
    <property type="evidence" value="ECO:0007669"/>
    <property type="project" value="EnsemblFungi"/>
</dbReference>
<dbReference type="GO" id="GO:0061631">
    <property type="term" value="F:ubiquitin conjugating enzyme activity"/>
    <property type="evidence" value="ECO:0000318"/>
    <property type="project" value="GO_Central"/>
</dbReference>
<dbReference type="GO" id="GO:0004842">
    <property type="term" value="F:ubiquitin-protein transferase activity"/>
    <property type="evidence" value="ECO:0000316"/>
    <property type="project" value="CGD"/>
</dbReference>
<dbReference type="GO" id="GO:0034620">
    <property type="term" value="P:cellular response to unfolded protein"/>
    <property type="evidence" value="ECO:0007669"/>
    <property type="project" value="EnsemblFungi"/>
</dbReference>
<dbReference type="GO" id="GO:0034644">
    <property type="term" value="P:cellular response to UV"/>
    <property type="evidence" value="ECO:0000315"/>
    <property type="project" value="CGD"/>
</dbReference>
<dbReference type="GO" id="GO:0071629">
    <property type="term" value="P:cytoplasm protein quality control by the ubiquitin-proteasome system"/>
    <property type="evidence" value="ECO:0007669"/>
    <property type="project" value="EnsemblFungi"/>
</dbReference>
<dbReference type="GO" id="GO:0006974">
    <property type="term" value="P:DNA damage response"/>
    <property type="evidence" value="ECO:0000270"/>
    <property type="project" value="CGD"/>
</dbReference>
<dbReference type="GO" id="GO:0006281">
    <property type="term" value="P:DNA repair"/>
    <property type="evidence" value="ECO:0000318"/>
    <property type="project" value="GO_Central"/>
</dbReference>
<dbReference type="GO" id="GO:0006353">
    <property type="term" value="P:DNA-templated transcription termination"/>
    <property type="evidence" value="ECO:0007669"/>
    <property type="project" value="EnsemblFungi"/>
</dbReference>
<dbReference type="GO" id="GO:0000724">
    <property type="term" value="P:double-strand break repair via homologous recombination"/>
    <property type="evidence" value="ECO:0007669"/>
    <property type="project" value="EnsemblFungi"/>
</dbReference>
<dbReference type="GO" id="GO:0036503">
    <property type="term" value="P:ERAD pathway"/>
    <property type="evidence" value="ECO:0007669"/>
    <property type="project" value="EnsemblFungi"/>
</dbReference>
<dbReference type="GO" id="GO:0042275">
    <property type="term" value="P:error-free postreplication DNA repair"/>
    <property type="evidence" value="ECO:0007669"/>
    <property type="project" value="EnsemblFungi"/>
</dbReference>
<dbReference type="GO" id="GO:0070987">
    <property type="term" value="P:error-free translesion synthesis"/>
    <property type="evidence" value="ECO:0007669"/>
    <property type="project" value="EnsemblFungi"/>
</dbReference>
<dbReference type="GO" id="GO:0042276">
    <property type="term" value="P:error-prone translesion synthesis"/>
    <property type="evidence" value="ECO:0007669"/>
    <property type="project" value="EnsemblFungi"/>
</dbReference>
<dbReference type="GO" id="GO:0030447">
    <property type="term" value="P:filamentous growth"/>
    <property type="evidence" value="ECO:0000315"/>
    <property type="project" value="CGD"/>
</dbReference>
<dbReference type="GO" id="GO:0042138">
    <property type="term" value="P:meiotic DNA double-strand break formation"/>
    <property type="evidence" value="ECO:0007669"/>
    <property type="project" value="EnsemblFungi"/>
</dbReference>
<dbReference type="GO" id="GO:0031571">
    <property type="term" value="P:mitotic G1 DNA damage checkpoint signaling"/>
    <property type="evidence" value="ECO:0007669"/>
    <property type="project" value="EnsemblFungi"/>
</dbReference>
<dbReference type="GO" id="GO:2000639">
    <property type="term" value="P:negative regulation of SREBP signaling pathway"/>
    <property type="evidence" value="ECO:0007669"/>
    <property type="project" value="EnsemblFungi"/>
</dbReference>
<dbReference type="GO" id="GO:0043161">
    <property type="term" value="P:proteasome-mediated ubiquitin-dependent protein catabolic process"/>
    <property type="evidence" value="ECO:0000318"/>
    <property type="project" value="GO_Central"/>
</dbReference>
<dbReference type="GO" id="GO:0000209">
    <property type="term" value="P:protein polyubiquitination"/>
    <property type="evidence" value="ECO:0000318"/>
    <property type="project" value="GO_Central"/>
</dbReference>
<dbReference type="GO" id="GO:0090089">
    <property type="term" value="P:regulation of dipeptide transport"/>
    <property type="evidence" value="ECO:0007669"/>
    <property type="project" value="EnsemblFungi"/>
</dbReference>
<dbReference type="GO" id="GO:0009302">
    <property type="term" value="P:sno(s)RNA transcription"/>
    <property type="evidence" value="ECO:0007669"/>
    <property type="project" value="EnsemblFungi"/>
</dbReference>
<dbReference type="GO" id="GO:0030435">
    <property type="term" value="P:sporulation resulting in formation of a cellular spore"/>
    <property type="evidence" value="ECO:0007669"/>
    <property type="project" value="UniProtKB-KW"/>
</dbReference>
<dbReference type="GO" id="GO:0120174">
    <property type="term" value="P:stress-induced homeostatically regulated protein degradation pathway"/>
    <property type="evidence" value="ECO:0007669"/>
    <property type="project" value="EnsemblFungi"/>
</dbReference>
<dbReference type="GO" id="GO:0031509">
    <property type="term" value="P:subtelomeric heterochromatin formation"/>
    <property type="evidence" value="ECO:0007669"/>
    <property type="project" value="EnsemblFungi"/>
</dbReference>
<dbReference type="GO" id="GO:0000722">
    <property type="term" value="P:telomere maintenance via recombination"/>
    <property type="evidence" value="ECO:0007669"/>
    <property type="project" value="EnsemblFungi"/>
</dbReference>
<dbReference type="GO" id="GO:0006366">
    <property type="term" value="P:transcription by RNA polymerase II"/>
    <property type="evidence" value="ECO:0007669"/>
    <property type="project" value="EnsemblFungi"/>
</dbReference>
<dbReference type="GO" id="GO:0071596">
    <property type="term" value="P:ubiquitin-dependent protein catabolic process via the N-end rule pathway"/>
    <property type="evidence" value="ECO:0007669"/>
    <property type="project" value="EnsemblFungi"/>
</dbReference>
<dbReference type="CDD" id="cd23790">
    <property type="entry name" value="UBCc_UBE2A_2B"/>
    <property type="match status" value="1"/>
</dbReference>
<dbReference type="FunFam" id="3.10.110.10:FF:000007">
    <property type="entry name" value="Ubiquitin-conjugating enzyme E2 2"/>
    <property type="match status" value="1"/>
</dbReference>
<dbReference type="Gene3D" id="3.10.110.10">
    <property type="entry name" value="Ubiquitin Conjugating Enzyme"/>
    <property type="match status" value="1"/>
</dbReference>
<dbReference type="InterPro" id="IPR050113">
    <property type="entry name" value="Ub_conjugating_enzyme"/>
</dbReference>
<dbReference type="InterPro" id="IPR000608">
    <property type="entry name" value="UBQ-conjugat_E2_core"/>
</dbReference>
<dbReference type="InterPro" id="IPR023313">
    <property type="entry name" value="UBQ-conjugating_AS"/>
</dbReference>
<dbReference type="InterPro" id="IPR016135">
    <property type="entry name" value="UBQ-conjugating_enzyme/RWD"/>
</dbReference>
<dbReference type="PANTHER" id="PTHR24067">
    <property type="entry name" value="UBIQUITIN-CONJUGATING ENZYME E2"/>
    <property type="match status" value="1"/>
</dbReference>
<dbReference type="Pfam" id="PF00179">
    <property type="entry name" value="UQ_con"/>
    <property type="match status" value="1"/>
</dbReference>
<dbReference type="SMART" id="SM00212">
    <property type="entry name" value="UBCc"/>
    <property type="match status" value="1"/>
</dbReference>
<dbReference type="SUPFAM" id="SSF54495">
    <property type="entry name" value="UBC-like"/>
    <property type="match status" value="1"/>
</dbReference>
<dbReference type="PROSITE" id="PS00183">
    <property type="entry name" value="UBC_1"/>
    <property type="match status" value="1"/>
</dbReference>
<dbReference type="PROSITE" id="PS50127">
    <property type="entry name" value="UBC_2"/>
    <property type="match status" value="1"/>
</dbReference>
<sequence length="179" mass="20576">MSTPARRRLMRDFKRMQQDPPSGVSASPLPDNVMKWNAVIIGPSDTPFEDGTFRLLLSFDEQYPNKPPQVKFISEMFHPNVYASGELCLDILQNRWSPTYDVSSILTSVQSLLNDPNISSPANVEAANLYKDHRSLYVKRVRETVENSWNDDDDEEEEEEDEDEAEDEDDDDDDNIDED</sequence>
<protein>
    <recommendedName>
        <fullName>Ubiquitin-conjugating enzyme E2 2</fullName>
        <ecNumber>2.3.2.23</ecNumber>
    </recommendedName>
    <alternativeName>
        <fullName>E2 ubiquitin-conjugating enzyme 2</fullName>
    </alternativeName>
    <alternativeName>
        <fullName>Radiation sensitivity protein 6</fullName>
    </alternativeName>
    <alternativeName>
        <fullName>Ubiquitin carrier protein UBC2</fullName>
    </alternativeName>
    <alternativeName>
        <fullName>Ubiquitin-protein ligase UBC2</fullName>
    </alternativeName>
</protein>